<proteinExistence type="inferred from homology"/>
<dbReference type="EC" id="4.98.1.1" evidence="2"/>
<dbReference type="EC" id="1.11.1.-" evidence="2"/>
<dbReference type="EMBL" id="CP000243">
    <property type="protein sequence ID" value="ABE06566.1"/>
    <property type="molecule type" value="Genomic_DNA"/>
</dbReference>
<dbReference type="RefSeq" id="WP_001199135.1">
    <property type="nucleotide sequence ID" value="NZ_CP064825.1"/>
</dbReference>
<dbReference type="SMR" id="Q1RDJ8"/>
<dbReference type="PeroxiBase" id="5872">
    <property type="entry name" value="EcoDyPrx01_UTI89"/>
</dbReference>
<dbReference type="KEGG" id="eci:UTI89_C1082"/>
<dbReference type="HOGENOM" id="CLU_039488_0_0_6"/>
<dbReference type="Proteomes" id="UP000001952">
    <property type="component" value="Chromosome"/>
</dbReference>
<dbReference type="GO" id="GO:0005829">
    <property type="term" value="C:cytosol"/>
    <property type="evidence" value="ECO:0007669"/>
    <property type="project" value="TreeGrafter"/>
</dbReference>
<dbReference type="GO" id="GO:0042597">
    <property type="term" value="C:periplasmic space"/>
    <property type="evidence" value="ECO:0007669"/>
    <property type="project" value="UniProtKB-SubCell"/>
</dbReference>
<dbReference type="GO" id="GO:0004325">
    <property type="term" value="F:ferrochelatase activity"/>
    <property type="evidence" value="ECO:0007669"/>
    <property type="project" value="RHEA"/>
</dbReference>
<dbReference type="GO" id="GO:0020037">
    <property type="term" value="F:heme binding"/>
    <property type="evidence" value="ECO:0007669"/>
    <property type="project" value="InterPro"/>
</dbReference>
<dbReference type="GO" id="GO:0046872">
    <property type="term" value="F:metal ion binding"/>
    <property type="evidence" value="ECO:0007669"/>
    <property type="project" value="UniProtKB-KW"/>
</dbReference>
<dbReference type="GO" id="GO:0004601">
    <property type="term" value="F:peroxidase activity"/>
    <property type="evidence" value="ECO:0007669"/>
    <property type="project" value="UniProtKB-KW"/>
</dbReference>
<dbReference type="GO" id="GO:0033212">
    <property type="term" value="P:iron import into cell"/>
    <property type="evidence" value="ECO:0007669"/>
    <property type="project" value="InterPro"/>
</dbReference>
<dbReference type="InterPro" id="IPR011008">
    <property type="entry name" value="Dimeric_a/b-barrel"/>
</dbReference>
<dbReference type="InterPro" id="IPR048328">
    <property type="entry name" value="Dyp_perox_C"/>
</dbReference>
<dbReference type="InterPro" id="IPR048327">
    <property type="entry name" value="Dyp_perox_N"/>
</dbReference>
<dbReference type="InterPro" id="IPR006314">
    <property type="entry name" value="Dyp_peroxidase"/>
</dbReference>
<dbReference type="InterPro" id="IPR006313">
    <property type="entry name" value="EfeB/EfeN"/>
</dbReference>
<dbReference type="InterPro" id="IPR006311">
    <property type="entry name" value="TAT_signal"/>
</dbReference>
<dbReference type="NCBIfam" id="TIGR01413">
    <property type="entry name" value="Dyp_perox_fam"/>
    <property type="match status" value="1"/>
</dbReference>
<dbReference type="NCBIfam" id="TIGR01412">
    <property type="entry name" value="tat_substr_1"/>
    <property type="match status" value="1"/>
</dbReference>
<dbReference type="PANTHER" id="PTHR30521:SF4">
    <property type="entry name" value="DEFERROCHELATASE"/>
    <property type="match status" value="1"/>
</dbReference>
<dbReference type="PANTHER" id="PTHR30521">
    <property type="entry name" value="DEFERROCHELATASE/PEROXIDASE"/>
    <property type="match status" value="1"/>
</dbReference>
<dbReference type="Pfam" id="PF20628">
    <property type="entry name" value="Dyp_perox_C"/>
    <property type="match status" value="1"/>
</dbReference>
<dbReference type="Pfam" id="PF04261">
    <property type="entry name" value="Dyp_perox_N"/>
    <property type="match status" value="1"/>
</dbReference>
<dbReference type="SUPFAM" id="SSF54909">
    <property type="entry name" value="Dimeric alpha+beta barrel"/>
    <property type="match status" value="1"/>
</dbReference>
<dbReference type="PROSITE" id="PS51404">
    <property type="entry name" value="DYP_PEROXIDASE"/>
    <property type="match status" value="1"/>
</dbReference>
<dbReference type="PROSITE" id="PS51318">
    <property type="entry name" value="TAT"/>
    <property type="match status" value="1"/>
</dbReference>
<protein>
    <recommendedName>
        <fullName>Deferrochelatase</fullName>
        <ecNumber evidence="2">4.98.1.1</ecNumber>
    </recommendedName>
    <alternativeName>
        <fullName>Peroxidase EfeB</fullName>
        <ecNumber evidence="2">1.11.1.-</ecNumber>
    </alternativeName>
</protein>
<gene>
    <name type="primary">efeB</name>
    <name type="ordered locus">UTI89_C1082</name>
</gene>
<name>EFEB_ECOUT</name>
<keyword id="KW-0349">Heme</keyword>
<keyword id="KW-0408">Iron</keyword>
<keyword id="KW-0456">Lyase</keyword>
<keyword id="KW-0479">Metal-binding</keyword>
<keyword id="KW-0560">Oxidoreductase</keyword>
<keyword id="KW-0574">Periplasm</keyword>
<keyword id="KW-0575">Peroxidase</keyword>
<keyword id="KW-0732">Signal</keyword>
<evidence type="ECO:0000250" key="1"/>
<evidence type="ECO:0000250" key="2">
    <source>
        <dbReference type="UniProtKB" id="P31545"/>
    </source>
</evidence>
<evidence type="ECO:0000255" key="3">
    <source>
        <dbReference type="PROSITE-ProRule" id="PRU00648"/>
    </source>
</evidence>
<evidence type="ECO:0000305" key="4"/>
<accession>Q1RDJ8</accession>
<reference key="1">
    <citation type="journal article" date="2006" name="Proc. Natl. Acad. Sci. U.S.A.">
        <title>Identification of genes subject to positive selection in uropathogenic strains of Escherichia coli: a comparative genomics approach.</title>
        <authorList>
            <person name="Chen S.L."/>
            <person name="Hung C.-S."/>
            <person name="Xu J."/>
            <person name="Reigstad C.S."/>
            <person name="Magrini V."/>
            <person name="Sabo A."/>
            <person name="Blasiar D."/>
            <person name="Bieri T."/>
            <person name="Meyer R.R."/>
            <person name="Ozersky P."/>
            <person name="Armstrong J.R."/>
            <person name="Fulton R.S."/>
            <person name="Latreille J.P."/>
            <person name="Spieth J."/>
            <person name="Hooton T.M."/>
            <person name="Mardis E.R."/>
            <person name="Hultgren S.J."/>
            <person name="Gordon J.I."/>
        </authorList>
    </citation>
    <scope>NUCLEOTIDE SEQUENCE [LARGE SCALE GENOMIC DNA]</scope>
    <source>
        <strain>UTI89 / UPEC</strain>
    </source>
</reference>
<comment type="function">
    <text evidence="2">Involved in the recovery of exogenous heme iron. Extracts iron from heme while preserving the protoporphyrin ring intact.</text>
</comment>
<comment type="catalytic activity">
    <reaction evidence="2">
        <text>heme b + 2 H(+) = protoporphyrin IX + Fe(2+)</text>
        <dbReference type="Rhea" id="RHEA:22584"/>
        <dbReference type="ChEBI" id="CHEBI:15378"/>
        <dbReference type="ChEBI" id="CHEBI:29033"/>
        <dbReference type="ChEBI" id="CHEBI:57306"/>
        <dbReference type="ChEBI" id="CHEBI:60344"/>
        <dbReference type="EC" id="4.98.1.1"/>
    </reaction>
    <physiologicalReaction direction="left-to-right" evidence="2">
        <dbReference type="Rhea" id="RHEA:22585"/>
    </physiologicalReaction>
</comment>
<comment type="cofactor">
    <cofactor evidence="1">
        <name>heme b</name>
        <dbReference type="ChEBI" id="CHEBI:60344"/>
    </cofactor>
    <text evidence="1">Binds 1 heme b (iron(II)-protoporphyrin IX) group non-covalently per subunit.</text>
</comment>
<comment type="subunit">
    <text evidence="1">Homodimer. Part of a ferrous iron transporter composed of EfeU, EfeO and EfeB (By similarity).</text>
</comment>
<comment type="subcellular location">
    <subcellularLocation>
        <location evidence="1">Periplasm</location>
    </subcellularLocation>
</comment>
<comment type="PTM">
    <text>Predicted to be exported by the Tat system. The position of the signal peptide cleavage has not been experimentally proven.</text>
</comment>
<comment type="similarity">
    <text evidence="4">Belongs to the DyP-type peroxidase family. EfeB subfamily.</text>
</comment>
<organism>
    <name type="scientific">Escherichia coli (strain UTI89 / UPEC)</name>
    <dbReference type="NCBI Taxonomy" id="364106"/>
    <lineage>
        <taxon>Bacteria</taxon>
        <taxon>Pseudomonadati</taxon>
        <taxon>Pseudomonadota</taxon>
        <taxon>Gammaproteobacteria</taxon>
        <taxon>Enterobacterales</taxon>
        <taxon>Enterobacteriaceae</taxon>
        <taxon>Escherichia</taxon>
    </lineage>
</organism>
<sequence>MQYEDENGVNEPSRRRLLKGIGALALAGSCPVAHAQKTQSAPGTLSPDARNEKQPFYGEHQAGILTPQQAAMMLVAFDVLASDKADLERLFRLLTQRFAFLTQGGAAPETPNPRLPPLDSGILGGYIAPDNLTITLSVGHSLFDERFGLAPQMPKKLQKMTRFPNDSLDAALCHGDVLLQICANTQDTVIHALRDIIKHTPDLLSVRWKREGFISDHAARSKGKETPINLLGFKDGTANPDSQNDKLMQKVVWVTADQQEPAWTIGGSYQAVRLIQFRVEFWDRTPLKEQQTIFGRDKQTGAPLGMLHEHDVPDYASDPEGKVIALDSHIRLANPRTAESESSLMLRRGYSYSLGVTNSGQLDMGLLFVCYQHDLEKGFLTVQKRLNGEALEEYVKPIGGGYFFALPGVKDANDYLGSALLRV</sequence>
<feature type="signal peptide" description="Tat-type signal" evidence="3">
    <location>
        <begin position="1"/>
        <end position="35"/>
    </location>
</feature>
<feature type="chain" id="PRO_0000278543" description="Deferrochelatase">
    <location>
        <begin position="36"/>
        <end position="423"/>
    </location>
</feature>
<feature type="binding site" evidence="2">
    <location>
        <begin position="236"/>
        <end position="238"/>
    </location>
    <ligand>
        <name>heme b</name>
        <dbReference type="ChEBI" id="CHEBI:60344"/>
    </ligand>
</feature>
<feature type="binding site" description="proximal binding residue" evidence="2">
    <location>
        <position position="329"/>
    </location>
    <ligand>
        <name>heme b</name>
        <dbReference type="ChEBI" id="CHEBI:60344"/>
    </ligand>
    <ligandPart>
        <name>Fe</name>
        <dbReference type="ChEBI" id="CHEBI:18248"/>
    </ligandPart>
</feature>
<feature type="binding site" evidence="2">
    <location>
        <begin position="334"/>
        <end position="336"/>
    </location>
    <ligand>
        <name>heme b</name>
        <dbReference type="ChEBI" id="CHEBI:60344"/>
    </ligand>
</feature>
<feature type="binding site" evidence="2">
    <location>
        <position position="347"/>
    </location>
    <ligand>
        <name>heme b</name>
        <dbReference type="ChEBI" id="CHEBI:60344"/>
    </ligand>
</feature>